<feature type="chain" id="PRO_0000048279" description="Tubulin beta-2 chain">
    <location>
        <begin position="1"/>
        <end position="446"/>
    </location>
</feature>
<feature type="region of interest" description="Disordered" evidence="3">
    <location>
        <begin position="424"/>
        <end position="446"/>
    </location>
</feature>
<feature type="compositionally biased region" description="Acidic residues" evidence="3">
    <location>
        <begin position="429"/>
        <end position="446"/>
    </location>
</feature>
<feature type="binding site" evidence="2">
    <location>
        <position position="11"/>
    </location>
    <ligand>
        <name>GTP</name>
        <dbReference type="ChEBI" id="CHEBI:37565"/>
    </ligand>
</feature>
<feature type="binding site" evidence="1">
    <location>
        <position position="69"/>
    </location>
    <ligand>
        <name>GTP</name>
        <dbReference type="ChEBI" id="CHEBI:37565"/>
    </ligand>
</feature>
<feature type="binding site" evidence="1">
    <location>
        <position position="69"/>
    </location>
    <ligand>
        <name>Mg(2+)</name>
        <dbReference type="ChEBI" id="CHEBI:18420"/>
    </ligand>
</feature>
<feature type="binding site" evidence="2">
    <location>
        <position position="138"/>
    </location>
    <ligand>
        <name>GTP</name>
        <dbReference type="ChEBI" id="CHEBI:37565"/>
    </ligand>
</feature>
<feature type="binding site" evidence="2">
    <location>
        <position position="142"/>
    </location>
    <ligand>
        <name>GTP</name>
        <dbReference type="ChEBI" id="CHEBI:37565"/>
    </ligand>
</feature>
<feature type="binding site" evidence="2">
    <location>
        <position position="143"/>
    </location>
    <ligand>
        <name>GTP</name>
        <dbReference type="ChEBI" id="CHEBI:37565"/>
    </ligand>
</feature>
<feature type="binding site" evidence="2">
    <location>
        <position position="144"/>
    </location>
    <ligand>
        <name>GTP</name>
        <dbReference type="ChEBI" id="CHEBI:37565"/>
    </ligand>
</feature>
<feature type="binding site" evidence="2">
    <location>
        <position position="204"/>
    </location>
    <ligand>
        <name>GTP</name>
        <dbReference type="ChEBI" id="CHEBI:37565"/>
    </ligand>
</feature>
<feature type="binding site" evidence="2">
    <location>
        <position position="226"/>
    </location>
    <ligand>
        <name>GTP</name>
        <dbReference type="ChEBI" id="CHEBI:37565"/>
    </ligand>
</feature>
<feature type="sequence conflict" description="In Ref. 1; AAA28991." evidence="5" ref="1">
    <original>L</original>
    <variation>S</variation>
    <location>
        <position position="135"/>
    </location>
</feature>
<protein>
    <recommendedName>
        <fullName>Tubulin beta-2 chain</fullName>
    </recommendedName>
    <alternativeName>
        <fullName>Beta-2-tubulin</fullName>
    </alternativeName>
</protein>
<comment type="function">
    <text>Tubulin is the major constituent of microtubules, a cylinder consisting of laterally associated linear protofilaments composed of alpha- and beta-tubulin heterodimers. Microtubules grow by the addition of GTP-tubulin dimers to the microtubule end, where a stabilizing cap forms. Below the cap, tubulin dimers are in GDP-bound state, owing to GTPase activity of alpha-tubulin.</text>
</comment>
<comment type="cofactor">
    <cofactor evidence="1">
        <name>Mg(2+)</name>
        <dbReference type="ChEBI" id="CHEBI:18420"/>
    </cofactor>
</comment>
<comment type="subunit">
    <text>Dimer of alpha and beta chains. A typical microtubule is a hollow water-filled tube with an outer diameter of 25 nm and an inner diameter of 15 nM. Alpha-beta heterodimers associate head-to-tail to form protofilaments running lengthwise along the microtubule wall with the beta-tubulin subunit facing the microtubule plus end conferring a structural polarity. Microtubules usually have 13 protofilaments but different protofilament numbers can be found in some organisms and specialized cells.</text>
</comment>
<comment type="subcellular location">
    <subcellularLocation>
        <location>Cytoplasm</location>
        <location>Cytoskeleton</location>
    </subcellularLocation>
</comment>
<comment type="tissue specificity">
    <text evidence="4">Testis specific.</text>
</comment>
<comment type="similarity">
    <text evidence="5">Belongs to the tubulin family.</text>
</comment>
<gene>
    <name type="primary">betaTub85D</name>
    <name type="synonym">TubB85D</name>
    <name type="ORF">CG9359</name>
</gene>
<accession>P61857</accession>
<accession>P08840</accession>
<accession>P22247</accession>
<accession>Q540X8</accession>
<accession>Q9VHE1</accession>
<organism>
    <name type="scientific">Drosophila melanogaster</name>
    <name type="common">Fruit fly</name>
    <dbReference type="NCBI Taxonomy" id="7227"/>
    <lineage>
        <taxon>Eukaryota</taxon>
        <taxon>Metazoa</taxon>
        <taxon>Ecdysozoa</taxon>
        <taxon>Arthropoda</taxon>
        <taxon>Hexapoda</taxon>
        <taxon>Insecta</taxon>
        <taxon>Pterygota</taxon>
        <taxon>Neoptera</taxon>
        <taxon>Endopterygota</taxon>
        <taxon>Diptera</taxon>
        <taxon>Brachycera</taxon>
        <taxon>Muscomorpha</taxon>
        <taxon>Ephydroidea</taxon>
        <taxon>Drosophilidae</taxon>
        <taxon>Drosophila</taxon>
        <taxon>Sophophora</taxon>
    </lineage>
</organism>
<name>TBB2_DROME</name>
<reference key="1">
    <citation type="journal article" date="1987" name="Chromosoma">
        <title>Testis-specific beta 2 tubulins are identical in Drosophila melanogaster and D. hydei but differ from the ubiquitous beta 1 tubulin.</title>
        <authorList>
            <person name="Michiels F."/>
            <person name="Falkenburg D."/>
            <person name="Mueller A.M."/>
            <person name="Hinz U."/>
            <person name="Otto U."/>
            <person name="Bellmann R."/>
            <person name="Glaetzer K.H."/>
            <person name="Brand R."/>
            <person name="Bialojan S."/>
            <person name="Renkawitz-Pohl R."/>
        </authorList>
    </citation>
    <scope>NUCLEOTIDE SEQUENCE [MRNA]</scope>
    <scope>TISSUE SPECIFICITY</scope>
</reference>
<reference key="2">
    <citation type="journal article" date="2000" name="Science">
        <title>The genome sequence of Drosophila melanogaster.</title>
        <authorList>
            <person name="Adams M.D."/>
            <person name="Celniker S.E."/>
            <person name="Holt R.A."/>
            <person name="Evans C.A."/>
            <person name="Gocayne J.D."/>
            <person name="Amanatides P.G."/>
            <person name="Scherer S.E."/>
            <person name="Li P.W."/>
            <person name="Hoskins R.A."/>
            <person name="Galle R.F."/>
            <person name="George R.A."/>
            <person name="Lewis S.E."/>
            <person name="Richards S."/>
            <person name="Ashburner M."/>
            <person name="Henderson S.N."/>
            <person name="Sutton G.G."/>
            <person name="Wortman J.R."/>
            <person name="Yandell M.D."/>
            <person name="Zhang Q."/>
            <person name="Chen L.X."/>
            <person name="Brandon R.C."/>
            <person name="Rogers Y.-H.C."/>
            <person name="Blazej R.G."/>
            <person name="Champe M."/>
            <person name="Pfeiffer B.D."/>
            <person name="Wan K.H."/>
            <person name="Doyle C."/>
            <person name="Baxter E.G."/>
            <person name="Helt G."/>
            <person name="Nelson C.R."/>
            <person name="Miklos G.L.G."/>
            <person name="Abril J.F."/>
            <person name="Agbayani A."/>
            <person name="An H.-J."/>
            <person name="Andrews-Pfannkoch C."/>
            <person name="Baldwin D."/>
            <person name="Ballew R.M."/>
            <person name="Basu A."/>
            <person name="Baxendale J."/>
            <person name="Bayraktaroglu L."/>
            <person name="Beasley E.M."/>
            <person name="Beeson K.Y."/>
            <person name="Benos P.V."/>
            <person name="Berman B.P."/>
            <person name="Bhandari D."/>
            <person name="Bolshakov S."/>
            <person name="Borkova D."/>
            <person name="Botchan M.R."/>
            <person name="Bouck J."/>
            <person name="Brokstein P."/>
            <person name="Brottier P."/>
            <person name="Burtis K.C."/>
            <person name="Busam D.A."/>
            <person name="Butler H."/>
            <person name="Cadieu E."/>
            <person name="Center A."/>
            <person name="Chandra I."/>
            <person name="Cherry J.M."/>
            <person name="Cawley S."/>
            <person name="Dahlke C."/>
            <person name="Davenport L.B."/>
            <person name="Davies P."/>
            <person name="de Pablos B."/>
            <person name="Delcher A."/>
            <person name="Deng Z."/>
            <person name="Mays A.D."/>
            <person name="Dew I."/>
            <person name="Dietz S.M."/>
            <person name="Dodson K."/>
            <person name="Doup L.E."/>
            <person name="Downes M."/>
            <person name="Dugan-Rocha S."/>
            <person name="Dunkov B.C."/>
            <person name="Dunn P."/>
            <person name="Durbin K.J."/>
            <person name="Evangelista C.C."/>
            <person name="Ferraz C."/>
            <person name="Ferriera S."/>
            <person name="Fleischmann W."/>
            <person name="Fosler C."/>
            <person name="Gabrielian A.E."/>
            <person name="Garg N.S."/>
            <person name="Gelbart W.M."/>
            <person name="Glasser K."/>
            <person name="Glodek A."/>
            <person name="Gong F."/>
            <person name="Gorrell J.H."/>
            <person name="Gu Z."/>
            <person name="Guan P."/>
            <person name="Harris M."/>
            <person name="Harris N.L."/>
            <person name="Harvey D.A."/>
            <person name="Heiman T.J."/>
            <person name="Hernandez J.R."/>
            <person name="Houck J."/>
            <person name="Hostin D."/>
            <person name="Houston K.A."/>
            <person name="Howland T.J."/>
            <person name="Wei M.-H."/>
            <person name="Ibegwam C."/>
            <person name="Jalali M."/>
            <person name="Kalush F."/>
            <person name="Karpen G.H."/>
            <person name="Ke Z."/>
            <person name="Kennison J.A."/>
            <person name="Ketchum K.A."/>
            <person name="Kimmel B.E."/>
            <person name="Kodira C.D."/>
            <person name="Kraft C.L."/>
            <person name="Kravitz S."/>
            <person name="Kulp D."/>
            <person name="Lai Z."/>
            <person name="Lasko P."/>
            <person name="Lei Y."/>
            <person name="Levitsky A.A."/>
            <person name="Li J.H."/>
            <person name="Li Z."/>
            <person name="Liang Y."/>
            <person name="Lin X."/>
            <person name="Liu X."/>
            <person name="Mattei B."/>
            <person name="McIntosh T.C."/>
            <person name="McLeod M.P."/>
            <person name="McPherson D."/>
            <person name="Merkulov G."/>
            <person name="Milshina N.V."/>
            <person name="Mobarry C."/>
            <person name="Morris J."/>
            <person name="Moshrefi A."/>
            <person name="Mount S.M."/>
            <person name="Moy M."/>
            <person name="Murphy B."/>
            <person name="Murphy L."/>
            <person name="Muzny D.M."/>
            <person name="Nelson D.L."/>
            <person name="Nelson D.R."/>
            <person name="Nelson K.A."/>
            <person name="Nixon K."/>
            <person name="Nusskern D.R."/>
            <person name="Pacleb J.M."/>
            <person name="Palazzolo M."/>
            <person name="Pittman G.S."/>
            <person name="Pan S."/>
            <person name="Pollard J."/>
            <person name="Puri V."/>
            <person name="Reese M.G."/>
            <person name="Reinert K."/>
            <person name="Remington K."/>
            <person name="Saunders R.D.C."/>
            <person name="Scheeler F."/>
            <person name="Shen H."/>
            <person name="Shue B.C."/>
            <person name="Siden-Kiamos I."/>
            <person name="Simpson M."/>
            <person name="Skupski M.P."/>
            <person name="Smith T.J."/>
            <person name="Spier E."/>
            <person name="Spradling A.C."/>
            <person name="Stapleton M."/>
            <person name="Strong R."/>
            <person name="Sun E."/>
            <person name="Svirskas R."/>
            <person name="Tector C."/>
            <person name="Turner R."/>
            <person name="Venter E."/>
            <person name="Wang A.H."/>
            <person name="Wang X."/>
            <person name="Wang Z.-Y."/>
            <person name="Wassarman D.A."/>
            <person name="Weinstock G.M."/>
            <person name="Weissenbach J."/>
            <person name="Williams S.M."/>
            <person name="Woodage T."/>
            <person name="Worley K.C."/>
            <person name="Wu D."/>
            <person name="Yang S."/>
            <person name="Yao Q.A."/>
            <person name="Ye J."/>
            <person name="Yeh R.-F."/>
            <person name="Zaveri J.S."/>
            <person name="Zhan M."/>
            <person name="Zhang G."/>
            <person name="Zhao Q."/>
            <person name="Zheng L."/>
            <person name="Zheng X.H."/>
            <person name="Zhong F.N."/>
            <person name="Zhong W."/>
            <person name="Zhou X."/>
            <person name="Zhu S.C."/>
            <person name="Zhu X."/>
            <person name="Smith H.O."/>
            <person name="Gibbs R.A."/>
            <person name="Myers E.W."/>
            <person name="Rubin G.M."/>
            <person name="Venter J.C."/>
        </authorList>
    </citation>
    <scope>NUCLEOTIDE SEQUENCE [LARGE SCALE GENOMIC DNA]</scope>
    <source>
        <strain>Berkeley</strain>
    </source>
</reference>
<reference key="3">
    <citation type="journal article" date="2002" name="Genome Biol.">
        <title>Annotation of the Drosophila melanogaster euchromatic genome: a systematic review.</title>
        <authorList>
            <person name="Misra S."/>
            <person name="Crosby M.A."/>
            <person name="Mungall C.J."/>
            <person name="Matthews B.B."/>
            <person name="Campbell K.S."/>
            <person name="Hradecky P."/>
            <person name="Huang Y."/>
            <person name="Kaminker J.S."/>
            <person name="Millburn G.H."/>
            <person name="Prochnik S.E."/>
            <person name="Smith C.D."/>
            <person name="Tupy J.L."/>
            <person name="Whitfield E.J."/>
            <person name="Bayraktaroglu L."/>
            <person name="Berman B.P."/>
            <person name="Bettencourt B.R."/>
            <person name="Celniker S.E."/>
            <person name="de Grey A.D.N.J."/>
            <person name="Drysdale R.A."/>
            <person name="Harris N.L."/>
            <person name="Richter J."/>
            <person name="Russo S."/>
            <person name="Schroeder A.J."/>
            <person name="Shu S.Q."/>
            <person name="Stapleton M."/>
            <person name="Yamada C."/>
            <person name="Ashburner M."/>
            <person name="Gelbart W.M."/>
            <person name="Rubin G.M."/>
            <person name="Lewis S.E."/>
        </authorList>
    </citation>
    <scope>GENOME REANNOTATION</scope>
    <source>
        <strain>Berkeley</strain>
    </source>
</reference>
<reference key="4">
    <citation type="journal article" date="2002" name="Genome Biol.">
        <title>A Drosophila full-length cDNA resource.</title>
        <authorList>
            <person name="Stapleton M."/>
            <person name="Carlson J.W."/>
            <person name="Brokstein P."/>
            <person name="Yu C."/>
            <person name="Champe M."/>
            <person name="George R.A."/>
            <person name="Guarin H."/>
            <person name="Kronmiller B."/>
            <person name="Pacleb J.M."/>
            <person name="Park S."/>
            <person name="Wan K.H."/>
            <person name="Rubin G.M."/>
            <person name="Celniker S.E."/>
        </authorList>
    </citation>
    <scope>NUCLEOTIDE SEQUENCE [LARGE SCALE MRNA]</scope>
    <source>
        <strain>Berkeley</strain>
        <tissue>Head</tissue>
    </source>
</reference>
<reference key="5">
    <citation type="journal article" date="1993" name="Exp. Cell Res.">
        <title>Identification of Drosophila wing imaginal disc proteins by two-dimensional gel analysis and microsequencing.</title>
        <authorList>
            <person name="Santaren J.F."/>
            <person name="van Damme J."/>
            <person name="Puype M."/>
            <person name="Vandekerckhove J."/>
            <person name="Garcia-Bellido A."/>
        </authorList>
    </citation>
    <scope>PROTEIN SEQUENCE OF 47-58 AND 104-121</scope>
    <source>
        <strain>Vallecas</strain>
        <tissue>Wing imaginal disk</tissue>
    </source>
</reference>
<proteinExistence type="evidence at protein level"/>
<dbReference type="EMBL" id="M20420">
    <property type="protein sequence ID" value="AAA28991.1"/>
    <property type="molecule type" value="mRNA"/>
</dbReference>
<dbReference type="EMBL" id="AE014297">
    <property type="protein sequence ID" value="AAF54373.1"/>
    <property type="molecule type" value="Genomic_DNA"/>
</dbReference>
<dbReference type="EMBL" id="AY118725">
    <property type="protein sequence ID" value="AAM50585.1"/>
    <property type="molecule type" value="mRNA"/>
</dbReference>
<dbReference type="RefSeq" id="NP_524290.2">
    <property type="nucleotide sequence ID" value="NM_079566.4"/>
</dbReference>
<dbReference type="SMR" id="P61857"/>
<dbReference type="BioGRID" id="66289">
    <property type="interactions" value="48"/>
</dbReference>
<dbReference type="FunCoup" id="P61857">
    <property type="interactions" value="124"/>
</dbReference>
<dbReference type="IntAct" id="P61857">
    <property type="interactions" value="36"/>
</dbReference>
<dbReference type="STRING" id="7227.FBpp0081524"/>
<dbReference type="PaxDb" id="7227-FBpp0081524"/>
<dbReference type="DNASU" id="41124"/>
<dbReference type="EnsemblMetazoa" id="FBtr0082046">
    <property type="protein sequence ID" value="FBpp0081524"/>
    <property type="gene ID" value="FBgn0003889"/>
</dbReference>
<dbReference type="GeneID" id="41124"/>
<dbReference type="KEGG" id="dme:Dmel_CG9359"/>
<dbReference type="AGR" id="FB:FBgn0003889"/>
<dbReference type="CTD" id="41124"/>
<dbReference type="FlyBase" id="FBgn0003889">
    <property type="gene designation" value="betaTub85D"/>
</dbReference>
<dbReference type="VEuPathDB" id="VectorBase:FBgn0003889"/>
<dbReference type="eggNOG" id="KOG1375">
    <property type="taxonomic scope" value="Eukaryota"/>
</dbReference>
<dbReference type="GeneTree" id="ENSGT00940000154150"/>
<dbReference type="HOGENOM" id="CLU_015718_1_1_1"/>
<dbReference type="InParanoid" id="P61857"/>
<dbReference type="OMA" id="WVPRSVN"/>
<dbReference type="OrthoDB" id="1662883at2759"/>
<dbReference type="PhylomeDB" id="P61857"/>
<dbReference type="Reactome" id="R-DME-3371497">
    <property type="pathway name" value="HSP90 chaperone cycle for steroid hormone receptors (SHR) in the presence of ligand"/>
</dbReference>
<dbReference type="Reactome" id="R-DME-6807878">
    <property type="pathway name" value="COPI-mediated anterograde transport"/>
</dbReference>
<dbReference type="Reactome" id="R-DME-6811434">
    <property type="pathway name" value="COPI-dependent Golgi-to-ER retrograde traffic"/>
</dbReference>
<dbReference type="Reactome" id="R-DME-6811436">
    <property type="pathway name" value="COPI-independent Golgi-to-ER retrograde traffic"/>
</dbReference>
<dbReference type="Reactome" id="R-DME-983189">
    <property type="pathway name" value="Kinesins"/>
</dbReference>
<dbReference type="BioGRID-ORCS" id="41124">
    <property type="hits" value="0 hits in 3 CRISPR screens"/>
</dbReference>
<dbReference type="GenomeRNAi" id="41124"/>
<dbReference type="PRO" id="PR:P61857"/>
<dbReference type="Proteomes" id="UP000000803">
    <property type="component" value="Chromosome 3R"/>
</dbReference>
<dbReference type="Bgee" id="FBgn0003889">
    <property type="expression patterns" value="Expressed in early elongation stage spermatid (Drosophila) in testis and 63 other cell types or tissues"/>
</dbReference>
<dbReference type="GO" id="GO:0005737">
    <property type="term" value="C:cytoplasm"/>
    <property type="evidence" value="ECO:0000318"/>
    <property type="project" value="GO_Central"/>
</dbReference>
<dbReference type="GO" id="GO:0005874">
    <property type="term" value="C:microtubule"/>
    <property type="evidence" value="ECO:0000318"/>
    <property type="project" value="GO_Central"/>
</dbReference>
<dbReference type="GO" id="GO:0005525">
    <property type="term" value="F:GTP binding"/>
    <property type="evidence" value="ECO:0000318"/>
    <property type="project" value="GO_Central"/>
</dbReference>
<dbReference type="GO" id="GO:0003924">
    <property type="term" value="F:GTPase activity"/>
    <property type="evidence" value="ECO:0007669"/>
    <property type="project" value="InterPro"/>
</dbReference>
<dbReference type="GO" id="GO:0046872">
    <property type="term" value="F:metal ion binding"/>
    <property type="evidence" value="ECO:0007669"/>
    <property type="project" value="UniProtKB-KW"/>
</dbReference>
<dbReference type="GO" id="GO:0005200">
    <property type="term" value="F:structural constituent of cytoskeleton"/>
    <property type="evidence" value="ECO:0000318"/>
    <property type="project" value="GO_Central"/>
</dbReference>
<dbReference type="GO" id="GO:0000226">
    <property type="term" value="P:microtubule cytoskeleton organization"/>
    <property type="evidence" value="ECO:0000318"/>
    <property type="project" value="GO_Central"/>
</dbReference>
<dbReference type="GO" id="GO:0000278">
    <property type="term" value="P:mitotic cell cycle"/>
    <property type="evidence" value="ECO:0000318"/>
    <property type="project" value="GO_Central"/>
</dbReference>
<dbReference type="GO" id="GO:0007435">
    <property type="term" value="P:salivary gland morphogenesis"/>
    <property type="evidence" value="ECO:0000315"/>
    <property type="project" value="FlyBase"/>
</dbReference>
<dbReference type="CDD" id="cd02187">
    <property type="entry name" value="beta_tubulin"/>
    <property type="match status" value="1"/>
</dbReference>
<dbReference type="FunFam" id="1.10.287.600:FF:000006">
    <property type="entry name" value="Tubulin beta chain"/>
    <property type="match status" value="1"/>
</dbReference>
<dbReference type="FunFam" id="3.30.1330.20:FF:000002">
    <property type="entry name" value="Tubulin beta chain"/>
    <property type="match status" value="1"/>
</dbReference>
<dbReference type="FunFam" id="3.40.50.1440:FF:000003">
    <property type="entry name" value="Tubulin beta chain"/>
    <property type="match status" value="1"/>
</dbReference>
<dbReference type="Gene3D" id="1.10.287.600">
    <property type="entry name" value="Helix hairpin bin"/>
    <property type="match status" value="1"/>
</dbReference>
<dbReference type="Gene3D" id="3.30.1330.20">
    <property type="entry name" value="Tubulin/FtsZ, C-terminal domain"/>
    <property type="match status" value="1"/>
</dbReference>
<dbReference type="Gene3D" id="3.40.50.1440">
    <property type="entry name" value="Tubulin/FtsZ, GTPase domain"/>
    <property type="match status" value="1"/>
</dbReference>
<dbReference type="InterPro" id="IPR013838">
    <property type="entry name" value="Beta-tubulin_BS"/>
</dbReference>
<dbReference type="InterPro" id="IPR002453">
    <property type="entry name" value="Beta_tubulin"/>
</dbReference>
<dbReference type="InterPro" id="IPR008280">
    <property type="entry name" value="Tub_FtsZ_C"/>
</dbReference>
<dbReference type="InterPro" id="IPR000217">
    <property type="entry name" value="Tubulin"/>
</dbReference>
<dbReference type="InterPro" id="IPR037103">
    <property type="entry name" value="Tubulin/FtsZ-like_C"/>
</dbReference>
<dbReference type="InterPro" id="IPR018316">
    <property type="entry name" value="Tubulin/FtsZ_2-layer-sand-dom"/>
</dbReference>
<dbReference type="InterPro" id="IPR036525">
    <property type="entry name" value="Tubulin/FtsZ_GTPase_sf"/>
</dbReference>
<dbReference type="InterPro" id="IPR023123">
    <property type="entry name" value="Tubulin_C"/>
</dbReference>
<dbReference type="InterPro" id="IPR017975">
    <property type="entry name" value="Tubulin_CS"/>
</dbReference>
<dbReference type="InterPro" id="IPR003008">
    <property type="entry name" value="Tubulin_FtsZ_GTPase"/>
</dbReference>
<dbReference type="PANTHER" id="PTHR11588">
    <property type="entry name" value="TUBULIN"/>
    <property type="match status" value="1"/>
</dbReference>
<dbReference type="Pfam" id="PF00091">
    <property type="entry name" value="Tubulin"/>
    <property type="match status" value="1"/>
</dbReference>
<dbReference type="Pfam" id="PF03953">
    <property type="entry name" value="Tubulin_C"/>
    <property type="match status" value="1"/>
</dbReference>
<dbReference type="PRINTS" id="PR01163">
    <property type="entry name" value="BETATUBULIN"/>
</dbReference>
<dbReference type="PRINTS" id="PR01161">
    <property type="entry name" value="TUBULIN"/>
</dbReference>
<dbReference type="SMART" id="SM00864">
    <property type="entry name" value="Tubulin"/>
    <property type="match status" value="1"/>
</dbReference>
<dbReference type="SMART" id="SM00865">
    <property type="entry name" value="Tubulin_C"/>
    <property type="match status" value="1"/>
</dbReference>
<dbReference type="SUPFAM" id="SSF55307">
    <property type="entry name" value="Tubulin C-terminal domain-like"/>
    <property type="match status" value="1"/>
</dbReference>
<dbReference type="SUPFAM" id="SSF52490">
    <property type="entry name" value="Tubulin nucleotide-binding domain-like"/>
    <property type="match status" value="1"/>
</dbReference>
<dbReference type="PROSITE" id="PS00227">
    <property type="entry name" value="TUBULIN"/>
    <property type="match status" value="1"/>
</dbReference>
<dbReference type="PROSITE" id="PS00228">
    <property type="entry name" value="TUBULIN_B_AUTOREG"/>
    <property type="match status" value="1"/>
</dbReference>
<evidence type="ECO:0000250" key="1">
    <source>
        <dbReference type="UniProtKB" id="P68363"/>
    </source>
</evidence>
<evidence type="ECO:0000250" key="2">
    <source>
        <dbReference type="UniProtKB" id="Q13509"/>
    </source>
</evidence>
<evidence type="ECO:0000256" key="3">
    <source>
        <dbReference type="SAM" id="MobiDB-lite"/>
    </source>
</evidence>
<evidence type="ECO:0000269" key="4">
    <source>
    </source>
</evidence>
<evidence type="ECO:0000305" key="5"/>
<sequence>MREIVHIQAGQCGNQIGGKFWEVISDEHCIDATGTYYGDSDLQLERINVYYNEATGAKYVPRAILVDLEPGTMDSVRSGAFGQIFRPDNFVFGQSGAGNNWAKGHYTEGAELVDSVLDVVRKESEGCDCLQGFQLTHSLGGGTGSGMGTLLISKIREEYPDRIMNTFSVVPSPKVSDTVVEPYNATLSVHQLVENTDETYCIDNEALYDICFRTLKLTTPTYGDLNHLVSATMSGVTTCLRFPGQLNADLRKLAVNMVPFPRLHFFMPGFAPLTSRGSQQYRALTVPELTQQMFDAKNMMAACDPRHGRYLTVAAIFRGRMSMKEVDEQMLNIQNKNSSFFVEWIPNNCKTAVCDIPPRGLKMSATFIGNSTAIQELFKRVSEQFTAMFRRKAFLHWYTGEGMDEMEFTEAESNMNDLVSEYQQYQEATADEEGEFDEDEEGGGDE</sequence>
<keyword id="KW-0963">Cytoplasm</keyword>
<keyword id="KW-0206">Cytoskeleton</keyword>
<keyword id="KW-0903">Direct protein sequencing</keyword>
<keyword id="KW-0342">GTP-binding</keyword>
<keyword id="KW-0460">Magnesium</keyword>
<keyword id="KW-0479">Metal-binding</keyword>
<keyword id="KW-0493">Microtubule</keyword>
<keyword id="KW-0547">Nucleotide-binding</keyword>
<keyword id="KW-1185">Reference proteome</keyword>